<name>PGM_ENTDI</name>
<reference key="1">
    <citation type="journal article" date="1997" name="Mol. Biochem. Parasitol.">
        <title>Molecular and biochemical characterization of phosphoglucomutases from Entamoeba histolytica and Entomoeba dispar.</title>
        <authorList>
            <person name="Ortner S."/>
            <person name="Binder M."/>
            <person name="Scheiner O."/>
            <person name="Wiedermann G."/>
            <person name="Duchene M."/>
        </authorList>
    </citation>
    <scope>NUCLEOTIDE SEQUENCE [MRNA]</scope>
</reference>
<gene>
    <name type="primary">pgm</name>
</gene>
<feature type="chain" id="PRO_0000147791" description="Phosphoglucomutase">
    <location>
        <begin position="1"/>
        <end position="553"/>
    </location>
</feature>
<feature type="region of interest" description="Disordered" evidence="3">
    <location>
        <begin position="1"/>
        <end position="24"/>
    </location>
</feature>
<feature type="compositionally biased region" description="Polar residues" evidence="3">
    <location>
        <begin position="11"/>
        <end position="20"/>
    </location>
</feature>
<feature type="active site" description="Phosphoserine intermediate" evidence="2">
    <location>
        <position position="117"/>
    </location>
</feature>
<feature type="binding site" evidence="2">
    <location>
        <position position="20"/>
    </location>
    <ligand>
        <name>substrate</name>
    </ligand>
</feature>
<feature type="binding site" evidence="2">
    <location>
        <position position="24"/>
    </location>
    <ligand>
        <name>substrate</name>
    </ligand>
</feature>
<feature type="binding site" evidence="2">
    <location>
        <begin position="117"/>
        <end position="118"/>
    </location>
    <ligand>
        <name>substrate</name>
    </ligand>
</feature>
<feature type="binding site" description="via phosphate group" evidence="2">
    <location>
        <position position="117"/>
    </location>
    <ligand>
        <name>Mg(2+)</name>
        <dbReference type="ChEBI" id="CHEBI:18420"/>
    </ligand>
</feature>
<feature type="binding site" evidence="2">
    <location>
        <position position="131"/>
    </location>
    <ligand>
        <name>substrate</name>
    </ligand>
</feature>
<feature type="binding site" evidence="2">
    <location>
        <position position="289"/>
    </location>
    <ligand>
        <name>Mg(2+)</name>
        <dbReference type="ChEBI" id="CHEBI:18420"/>
    </ligand>
</feature>
<feature type="binding site" evidence="2">
    <location>
        <position position="291"/>
    </location>
    <ligand>
        <name>Mg(2+)</name>
        <dbReference type="ChEBI" id="CHEBI:18420"/>
    </ligand>
</feature>
<feature type="binding site" evidence="2">
    <location>
        <begin position="293"/>
        <end position="294"/>
    </location>
    <ligand>
        <name>substrate</name>
    </ligand>
</feature>
<feature type="binding site" evidence="2">
    <location>
        <position position="293"/>
    </location>
    <ligand>
        <name>Mg(2+)</name>
        <dbReference type="ChEBI" id="CHEBI:18420"/>
    </ligand>
</feature>
<feature type="binding site" evidence="2">
    <location>
        <position position="352"/>
    </location>
    <ligand>
        <name>substrate</name>
    </ligand>
</feature>
<feature type="binding site" evidence="2">
    <location>
        <begin position="371"/>
        <end position="373"/>
    </location>
    <ligand>
        <name>substrate</name>
    </ligand>
</feature>
<feature type="binding site" evidence="2">
    <location>
        <position position="384"/>
    </location>
    <ligand>
        <name>substrate</name>
    </ligand>
</feature>
<feature type="binding site" evidence="2">
    <location>
        <position position="509"/>
    </location>
    <ligand>
        <name>substrate</name>
    </ligand>
</feature>
<sequence>MQATVKRYPTTPISGQTMGTSGLRKRASEVENTPNYLENFVNAMFNAASNLQKPGKIIIGGDGRYLNLKALDIIIRVALSRGFTDIVVGKSGFMSTPAESATIIRRKAEAGFIMTASHNPAGKDHGDFGLKLNMSNGGPAPLEVTSKIEESARNIKEIVIAELNKPLTIDTIGDIEIECEGKKAIVHVIDPLEDYIAYLHECFDFEKLKQFVSKYHLKVQVDGFNAVTGIYNKKVFCELLGLPESSLKNAIPMPDFGGKHPDPNLTYAAELVHAVIPEDSPYDIGFAFDGDGDRNLIVGRGAFVSPSDSLAILSTKYNDIPFFVKNGFKGVARSMPTSAAVDHVTSITETPTGWKFFGNLMDSGKISLCGEESFGTGCCGIREKDGIWAALCWVSILAAESERAQRLVGVKEILENHWAKYGRNYYQRYDFDEVDKKAAEDMMQMMRDNAKTVKCDLNGVPLKFCDDFEYHDSVDGSVTSKQGIRFVFEDGSRIIFRLSGTGSVGATIRVYFDKYSKDYKADQNKMLADMVTVAYAVSQITKFTGREKPSVVT</sequence>
<keyword id="KW-0963">Cytoplasm</keyword>
<keyword id="KW-0413">Isomerase</keyword>
<keyword id="KW-0460">Magnesium</keyword>
<keyword id="KW-0479">Metal-binding</keyword>
<keyword id="KW-0597">Phosphoprotein</keyword>
<evidence type="ECO:0000250" key="1"/>
<evidence type="ECO:0000250" key="2">
    <source>
        <dbReference type="UniProtKB" id="P00949"/>
    </source>
</evidence>
<evidence type="ECO:0000256" key="3">
    <source>
        <dbReference type="SAM" id="MobiDB-lite"/>
    </source>
</evidence>
<evidence type="ECO:0000305" key="4"/>
<proteinExistence type="evidence at transcript level"/>
<organism>
    <name type="scientific">Entamoeba dispar</name>
    <dbReference type="NCBI Taxonomy" id="46681"/>
    <lineage>
        <taxon>Eukaryota</taxon>
        <taxon>Amoebozoa</taxon>
        <taxon>Evosea</taxon>
        <taxon>Archamoebae</taxon>
        <taxon>Mastigamoebida</taxon>
        <taxon>Entamoebidae</taxon>
        <taxon>Entamoeba</taxon>
    </lineage>
</organism>
<dbReference type="EC" id="5.4.2.2"/>
<dbReference type="EMBL" id="Y14445">
    <property type="protein sequence ID" value="CAA74797.1"/>
    <property type="molecule type" value="mRNA"/>
</dbReference>
<dbReference type="SMR" id="O18719"/>
<dbReference type="VEuPathDB" id="AmoebaDB:EDI_174890"/>
<dbReference type="OMA" id="WIQDRAN"/>
<dbReference type="GO" id="GO:0005829">
    <property type="term" value="C:cytosol"/>
    <property type="evidence" value="ECO:0007669"/>
    <property type="project" value="TreeGrafter"/>
</dbReference>
<dbReference type="GO" id="GO:0000287">
    <property type="term" value="F:magnesium ion binding"/>
    <property type="evidence" value="ECO:0007669"/>
    <property type="project" value="InterPro"/>
</dbReference>
<dbReference type="GO" id="GO:0004614">
    <property type="term" value="F:phosphoglucomutase activity"/>
    <property type="evidence" value="ECO:0007669"/>
    <property type="project" value="UniProtKB-EC"/>
</dbReference>
<dbReference type="GO" id="GO:0005975">
    <property type="term" value="P:carbohydrate metabolic process"/>
    <property type="evidence" value="ECO:0007669"/>
    <property type="project" value="InterPro"/>
</dbReference>
<dbReference type="FunFam" id="3.30.310.50:FF:000010">
    <property type="entry name" value="Phosphoglucomutase"/>
    <property type="match status" value="1"/>
</dbReference>
<dbReference type="FunFam" id="3.40.120.10:FF:000004">
    <property type="entry name" value="Phosphoglucomutase 5"/>
    <property type="match status" value="1"/>
</dbReference>
<dbReference type="Gene3D" id="3.40.120.10">
    <property type="entry name" value="Alpha-D-Glucose-1,6-Bisphosphate, subunit A, domain 3"/>
    <property type="match status" value="3"/>
</dbReference>
<dbReference type="Gene3D" id="3.30.310.50">
    <property type="entry name" value="Alpha-D-phosphohexomutase, C-terminal domain"/>
    <property type="match status" value="1"/>
</dbReference>
<dbReference type="InterPro" id="IPR005844">
    <property type="entry name" value="A-D-PHexomutase_a/b/a-I"/>
</dbReference>
<dbReference type="InterPro" id="IPR016055">
    <property type="entry name" value="A-D-PHexomutase_a/b/a-I/II/III"/>
</dbReference>
<dbReference type="InterPro" id="IPR005845">
    <property type="entry name" value="A-D-PHexomutase_a/b/a-II"/>
</dbReference>
<dbReference type="InterPro" id="IPR005846">
    <property type="entry name" value="A-D-PHexomutase_a/b/a-III"/>
</dbReference>
<dbReference type="InterPro" id="IPR036900">
    <property type="entry name" value="A-D-PHexomutase_C_sf"/>
</dbReference>
<dbReference type="InterPro" id="IPR016066">
    <property type="entry name" value="A-D-PHexomutase_CS"/>
</dbReference>
<dbReference type="InterPro" id="IPR005841">
    <property type="entry name" value="Alpha-D-phosphohexomutase_SF"/>
</dbReference>
<dbReference type="InterPro" id="IPR045244">
    <property type="entry name" value="PGM"/>
</dbReference>
<dbReference type="NCBIfam" id="NF005737">
    <property type="entry name" value="PRK07564.1-1"/>
    <property type="match status" value="1"/>
</dbReference>
<dbReference type="PANTHER" id="PTHR22573:SF2">
    <property type="entry name" value="PHOSPHOGLUCOMUTASE"/>
    <property type="match status" value="1"/>
</dbReference>
<dbReference type="PANTHER" id="PTHR22573">
    <property type="entry name" value="PHOSPHOHEXOMUTASE FAMILY MEMBER"/>
    <property type="match status" value="1"/>
</dbReference>
<dbReference type="Pfam" id="PF24947">
    <property type="entry name" value="PGM1_C_vert_fung"/>
    <property type="match status" value="1"/>
</dbReference>
<dbReference type="Pfam" id="PF02878">
    <property type="entry name" value="PGM_PMM_I"/>
    <property type="match status" value="1"/>
</dbReference>
<dbReference type="Pfam" id="PF02879">
    <property type="entry name" value="PGM_PMM_II"/>
    <property type="match status" value="1"/>
</dbReference>
<dbReference type="Pfam" id="PF02880">
    <property type="entry name" value="PGM_PMM_III"/>
    <property type="match status" value="1"/>
</dbReference>
<dbReference type="PRINTS" id="PR00509">
    <property type="entry name" value="PGMPMM"/>
</dbReference>
<dbReference type="SUPFAM" id="SSF55957">
    <property type="entry name" value="Phosphoglucomutase, C-terminal domain"/>
    <property type="match status" value="1"/>
</dbReference>
<dbReference type="SUPFAM" id="SSF53738">
    <property type="entry name" value="Phosphoglucomutase, first 3 domains"/>
    <property type="match status" value="3"/>
</dbReference>
<dbReference type="PROSITE" id="PS00710">
    <property type="entry name" value="PGM_PMM"/>
    <property type="match status" value="1"/>
</dbReference>
<comment type="function">
    <text evidence="1">This enzyme participates in both the breakdown and synthesis of glucose.</text>
</comment>
<comment type="catalytic activity">
    <reaction>
        <text>alpha-D-glucose 1-phosphate = alpha-D-glucose 6-phosphate</text>
        <dbReference type="Rhea" id="RHEA:23536"/>
        <dbReference type="ChEBI" id="CHEBI:58225"/>
        <dbReference type="ChEBI" id="CHEBI:58601"/>
        <dbReference type="EC" id="5.4.2.2"/>
    </reaction>
</comment>
<comment type="cofactor">
    <cofactor evidence="1">
        <name>Mg(2+)</name>
        <dbReference type="ChEBI" id="CHEBI:18420"/>
    </cofactor>
    <text evidence="1">Binds 1 Mg(2+) ion per subunit.</text>
</comment>
<comment type="subcellular location">
    <subcellularLocation>
        <location evidence="1">Cytoplasm</location>
    </subcellularLocation>
</comment>
<comment type="similarity">
    <text evidence="4">Belongs to the phosphohexose mutase family.</text>
</comment>
<accession>O18719</accession>
<protein>
    <recommendedName>
        <fullName>Phosphoglucomutase</fullName>
        <shortName>PGM</shortName>
        <ecNumber>5.4.2.2</ecNumber>
    </recommendedName>
    <alternativeName>
        <fullName>Glucose phosphomutase</fullName>
    </alternativeName>
</protein>